<name>ISPH_SALEP</name>
<dbReference type="EC" id="1.17.7.4" evidence="1"/>
<dbReference type="EMBL" id="AM933172">
    <property type="protein sequence ID" value="CAR31640.1"/>
    <property type="molecule type" value="Genomic_DNA"/>
</dbReference>
<dbReference type="RefSeq" id="WP_001166428.1">
    <property type="nucleotide sequence ID" value="NC_011294.1"/>
</dbReference>
<dbReference type="SMR" id="B5R1N9"/>
<dbReference type="KEGG" id="set:SEN0049"/>
<dbReference type="HOGENOM" id="CLU_027486_1_0_6"/>
<dbReference type="UniPathway" id="UPA00056">
    <property type="reaction ID" value="UER00097"/>
</dbReference>
<dbReference type="UniPathway" id="UPA00059">
    <property type="reaction ID" value="UER00105"/>
</dbReference>
<dbReference type="Proteomes" id="UP000000613">
    <property type="component" value="Chromosome"/>
</dbReference>
<dbReference type="GO" id="GO:0051539">
    <property type="term" value="F:4 iron, 4 sulfur cluster binding"/>
    <property type="evidence" value="ECO:0007669"/>
    <property type="project" value="UniProtKB-UniRule"/>
</dbReference>
<dbReference type="GO" id="GO:0051745">
    <property type="term" value="F:4-hydroxy-3-methylbut-2-enyl diphosphate reductase activity"/>
    <property type="evidence" value="ECO:0007669"/>
    <property type="project" value="UniProtKB-UniRule"/>
</dbReference>
<dbReference type="GO" id="GO:0046872">
    <property type="term" value="F:metal ion binding"/>
    <property type="evidence" value="ECO:0007669"/>
    <property type="project" value="UniProtKB-KW"/>
</dbReference>
<dbReference type="GO" id="GO:0050992">
    <property type="term" value="P:dimethylallyl diphosphate biosynthetic process"/>
    <property type="evidence" value="ECO:0007669"/>
    <property type="project" value="UniProtKB-UniRule"/>
</dbReference>
<dbReference type="GO" id="GO:0019288">
    <property type="term" value="P:isopentenyl diphosphate biosynthetic process, methylerythritol 4-phosphate pathway"/>
    <property type="evidence" value="ECO:0007669"/>
    <property type="project" value="UniProtKB-UniRule"/>
</dbReference>
<dbReference type="GO" id="GO:0016114">
    <property type="term" value="P:terpenoid biosynthetic process"/>
    <property type="evidence" value="ECO:0007669"/>
    <property type="project" value="UniProtKB-UniRule"/>
</dbReference>
<dbReference type="CDD" id="cd13944">
    <property type="entry name" value="lytB_ispH"/>
    <property type="match status" value="1"/>
</dbReference>
<dbReference type="FunFam" id="3.40.1010.20:FF:000001">
    <property type="entry name" value="4-hydroxy-3-methylbut-2-enyl diphosphate reductase"/>
    <property type="match status" value="1"/>
</dbReference>
<dbReference type="FunFam" id="3.40.50.11270:FF:000001">
    <property type="entry name" value="4-hydroxy-3-methylbut-2-enyl diphosphate reductase"/>
    <property type="match status" value="1"/>
</dbReference>
<dbReference type="Gene3D" id="3.40.50.11270">
    <property type="match status" value="1"/>
</dbReference>
<dbReference type="Gene3D" id="3.40.1010.20">
    <property type="entry name" value="4-hydroxy-3-methylbut-2-enyl diphosphate reductase, catalytic domain"/>
    <property type="match status" value="2"/>
</dbReference>
<dbReference type="HAMAP" id="MF_00191">
    <property type="entry name" value="IspH"/>
    <property type="match status" value="1"/>
</dbReference>
<dbReference type="InterPro" id="IPR003451">
    <property type="entry name" value="LytB/IspH"/>
</dbReference>
<dbReference type="NCBIfam" id="TIGR00216">
    <property type="entry name" value="ispH_lytB"/>
    <property type="match status" value="1"/>
</dbReference>
<dbReference type="NCBIfam" id="NF002188">
    <property type="entry name" value="PRK01045.1-2"/>
    <property type="match status" value="1"/>
</dbReference>
<dbReference type="NCBIfam" id="NF002190">
    <property type="entry name" value="PRK01045.1-4"/>
    <property type="match status" value="1"/>
</dbReference>
<dbReference type="PANTHER" id="PTHR30426">
    <property type="entry name" value="4-HYDROXY-3-METHYLBUT-2-ENYL DIPHOSPHATE REDUCTASE"/>
    <property type="match status" value="1"/>
</dbReference>
<dbReference type="PANTHER" id="PTHR30426:SF0">
    <property type="entry name" value="4-HYDROXY-3-METHYLBUT-2-ENYL DIPHOSPHATE REDUCTASE"/>
    <property type="match status" value="1"/>
</dbReference>
<dbReference type="Pfam" id="PF02401">
    <property type="entry name" value="LYTB"/>
    <property type="match status" value="1"/>
</dbReference>
<organism>
    <name type="scientific">Salmonella enteritidis PT4 (strain P125109)</name>
    <dbReference type="NCBI Taxonomy" id="550537"/>
    <lineage>
        <taxon>Bacteria</taxon>
        <taxon>Pseudomonadati</taxon>
        <taxon>Pseudomonadota</taxon>
        <taxon>Gammaproteobacteria</taxon>
        <taxon>Enterobacterales</taxon>
        <taxon>Enterobacteriaceae</taxon>
        <taxon>Salmonella</taxon>
    </lineage>
</organism>
<comment type="function">
    <text evidence="1">Catalyzes the conversion of 1-hydroxy-2-methyl-2-(E)-butenyl 4-diphosphate (HMBPP) into a mixture of isopentenyl diphosphate (IPP) and dimethylallyl diphosphate (DMAPP). Acts in the terminal step of the DOXP/MEP pathway for isoprenoid precursor biosynthesis.</text>
</comment>
<comment type="catalytic activity">
    <reaction evidence="1">
        <text>isopentenyl diphosphate + 2 oxidized [2Fe-2S]-[ferredoxin] + H2O = (2E)-4-hydroxy-3-methylbut-2-enyl diphosphate + 2 reduced [2Fe-2S]-[ferredoxin] + 2 H(+)</text>
        <dbReference type="Rhea" id="RHEA:24488"/>
        <dbReference type="Rhea" id="RHEA-COMP:10000"/>
        <dbReference type="Rhea" id="RHEA-COMP:10001"/>
        <dbReference type="ChEBI" id="CHEBI:15377"/>
        <dbReference type="ChEBI" id="CHEBI:15378"/>
        <dbReference type="ChEBI" id="CHEBI:33737"/>
        <dbReference type="ChEBI" id="CHEBI:33738"/>
        <dbReference type="ChEBI" id="CHEBI:128753"/>
        <dbReference type="ChEBI" id="CHEBI:128769"/>
        <dbReference type="EC" id="1.17.7.4"/>
    </reaction>
</comment>
<comment type="catalytic activity">
    <reaction evidence="1">
        <text>dimethylallyl diphosphate + 2 oxidized [2Fe-2S]-[ferredoxin] + H2O = (2E)-4-hydroxy-3-methylbut-2-enyl diphosphate + 2 reduced [2Fe-2S]-[ferredoxin] + 2 H(+)</text>
        <dbReference type="Rhea" id="RHEA:24825"/>
        <dbReference type="Rhea" id="RHEA-COMP:10000"/>
        <dbReference type="Rhea" id="RHEA-COMP:10001"/>
        <dbReference type="ChEBI" id="CHEBI:15377"/>
        <dbReference type="ChEBI" id="CHEBI:15378"/>
        <dbReference type="ChEBI" id="CHEBI:33737"/>
        <dbReference type="ChEBI" id="CHEBI:33738"/>
        <dbReference type="ChEBI" id="CHEBI:57623"/>
        <dbReference type="ChEBI" id="CHEBI:128753"/>
        <dbReference type="EC" id="1.17.7.4"/>
    </reaction>
</comment>
<comment type="cofactor">
    <cofactor evidence="1">
        <name>[4Fe-4S] cluster</name>
        <dbReference type="ChEBI" id="CHEBI:49883"/>
    </cofactor>
    <text evidence="1">Binds 1 [4Fe-4S] cluster per subunit.</text>
</comment>
<comment type="pathway">
    <text evidence="1">Isoprenoid biosynthesis; dimethylallyl diphosphate biosynthesis; dimethylallyl diphosphate from (2E)-4-hydroxy-3-methylbutenyl diphosphate: step 1/1.</text>
</comment>
<comment type="pathway">
    <text evidence="1">Isoprenoid biosynthesis; isopentenyl diphosphate biosynthesis via DXP pathway; isopentenyl diphosphate from 1-deoxy-D-xylulose 5-phosphate: step 6/6.</text>
</comment>
<comment type="subunit">
    <text evidence="1">Homodimer.</text>
</comment>
<comment type="similarity">
    <text evidence="1">Belongs to the IspH family.</text>
</comment>
<protein>
    <recommendedName>
        <fullName evidence="1">4-hydroxy-3-methylbut-2-enyl diphosphate reductase</fullName>
        <shortName evidence="1">HMBPP reductase</shortName>
        <ecNumber evidence="1">1.17.7.4</ecNumber>
    </recommendedName>
</protein>
<accession>B5R1N9</accession>
<reference key="1">
    <citation type="journal article" date="2008" name="Genome Res.">
        <title>Comparative genome analysis of Salmonella enteritidis PT4 and Salmonella gallinarum 287/91 provides insights into evolutionary and host adaptation pathways.</title>
        <authorList>
            <person name="Thomson N.R."/>
            <person name="Clayton D.J."/>
            <person name="Windhorst D."/>
            <person name="Vernikos G."/>
            <person name="Davidson S."/>
            <person name="Churcher C."/>
            <person name="Quail M.A."/>
            <person name="Stevens M."/>
            <person name="Jones M.A."/>
            <person name="Watson M."/>
            <person name="Barron A."/>
            <person name="Layton A."/>
            <person name="Pickard D."/>
            <person name="Kingsley R.A."/>
            <person name="Bignell A."/>
            <person name="Clark L."/>
            <person name="Harris B."/>
            <person name="Ormond D."/>
            <person name="Abdellah Z."/>
            <person name="Brooks K."/>
            <person name="Cherevach I."/>
            <person name="Chillingworth T."/>
            <person name="Woodward J."/>
            <person name="Norberczak H."/>
            <person name="Lord A."/>
            <person name="Arrowsmith C."/>
            <person name="Jagels K."/>
            <person name="Moule S."/>
            <person name="Mungall K."/>
            <person name="Saunders M."/>
            <person name="Whitehead S."/>
            <person name="Chabalgoity J.A."/>
            <person name="Maskell D."/>
            <person name="Humphreys T."/>
            <person name="Roberts M."/>
            <person name="Barrow P.A."/>
            <person name="Dougan G."/>
            <person name="Parkhill J."/>
        </authorList>
    </citation>
    <scope>NUCLEOTIDE SEQUENCE [LARGE SCALE GENOMIC DNA]</scope>
    <source>
        <strain>P125109</strain>
    </source>
</reference>
<sequence>MQILLANPRGFCAGVDRAISIVENALAIYGAPIYVRHEVVHNRYVVDSLRQRGAIFIEQISEVPDGAILIFSAHGVSQAVRNEAKSRDLTVFDATCPLVTKVHMEVARASRRGEESILIGHAGHPEVEGTMGQYSNPEGGMYLVESPEDVWTLNVKNEGKLSFMTQTTLSVDDTSDVIDALRKRFPKIVGPRKDDICYATTNRQEAVRALAEQADVVLVVGSKNSSNSNRLAELAQRMGRTAFLIDDAADIQEAWVKEAACVGVTAGASAPDILVQNVIARLREFGGGEAVTLEGREENIVFEVPKELRVDVREVE</sequence>
<proteinExistence type="inferred from homology"/>
<feature type="chain" id="PRO_1000098971" description="4-hydroxy-3-methylbut-2-enyl diphosphate reductase">
    <location>
        <begin position="1"/>
        <end position="316"/>
    </location>
</feature>
<feature type="active site" description="Proton donor" evidence="1">
    <location>
        <position position="126"/>
    </location>
</feature>
<feature type="binding site" evidence="1">
    <location>
        <position position="12"/>
    </location>
    <ligand>
        <name>[4Fe-4S] cluster</name>
        <dbReference type="ChEBI" id="CHEBI:49883"/>
    </ligand>
</feature>
<feature type="binding site" evidence="1">
    <location>
        <position position="41"/>
    </location>
    <ligand>
        <name>(2E)-4-hydroxy-3-methylbut-2-enyl diphosphate</name>
        <dbReference type="ChEBI" id="CHEBI:128753"/>
    </ligand>
</feature>
<feature type="binding site" evidence="1">
    <location>
        <position position="41"/>
    </location>
    <ligand>
        <name>dimethylallyl diphosphate</name>
        <dbReference type="ChEBI" id="CHEBI:57623"/>
    </ligand>
</feature>
<feature type="binding site" evidence="1">
    <location>
        <position position="41"/>
    </location>
    <ligand>
        <name>isopentenyl diphosphate</name>
        <dbReference type="ChEBI" id="CHEBI:128769"/>
    </ligand>
</feature>
<feature type="binding site" evidence="1">
    <location>
        <position position="74"/>
    </location>
    <ligand>
        <name>(2E)-4-hydroxy-3-methylbut-2-enyl diphosphate</name>
        <dbReference type="ChEBI" id="CHEBI:128753"/>
    </ligand>
</feature>
<feature type="binding site" evidence="1">
    <location>
        <position position="74"/>
    </location>
    <ligand>
        <name>dimethylallyl diphosphate</name>
        <dbReference type="ChEBI" id="CHEBI:57623"/>
    </ligand>
</feature>
<feature type="binding site" evidence="1">
    <location>
        <position position="74"/>
    </location>
    <ligand>
        <name>isopentenyl diphosphate</name>
        <dbReference type="ChEBI" id="CHEBI:128769"/>
    </ligand>
</feature>
<feature type="binding site" evidence="1">
    <location>
        <position position="96"/>
    </location>
    <ligand>
        <name>[4Fe-4S] cluster</name>
        <dbReference type="ChEBI" id="CHEBI:49883"/>
    </ligand>
</feature>
<feature type="binding site" evidence="1">
    <location>
        <position position="124"/>
    </location>
    <ligand>
        <name>(2E)-4-hydroxy-3-methylbut-2-enyl diphosphate</name>
        <dbReference type="ChEBI" id="CHEBI:128753"/>
    </ligand>
</feature>
<feature type="binding site" evidence="1">
    <location>
        <position position="124"/>
    </location>
    <ligand>
        <name>dimethylallyl diphosphate</name>
        <dbReference type="ChEBI" id="CHEBI:57623"/>
    </ligand>
</feature>
<feature type="binding site" evidence="1">
    <location>
        <position position="124"/>
    </location>
    <ligand>
        <name>isopentenyl diphosphate</name>
        <dbReference type="ChEBI" id="CHEBI:128769"/>
    </ligand>
</feature>
<feature type="binding site" evidence="1">
    <location>
        <position position="167"/>
    </location>
    <ligand>
        <name>(2E)-4-hydroxy-3-methylbut-2-enyl diphosphate</name>
        <dbReference type="ChEBI" id="CHEBI:128753"/>
    </ligand>
</feature>
<feature type="binding site" evidence="1">
    <location>
        <position position="197"/>
    </location>
    <ligand>
        <name>[4Fe-4S] cluster</name>
        <dbReference type="ChEBI" id="CHEBI:49883"/>
    </ligand>
</feature>
<feature type="binding site" evidence="1">
    <location>
        <position position="225"/>
    </location>
    <ligand>
        <name>(2E)-4-hydroxy-3-methylbut-2-enyl diphosphate</name>
        <dbReference type="ChEBI" id="CHEBI:128753"/>
    </ligand>
</feature>
<feature type="binding site" evidence="1">
    <location>
        <position position="225"/>
    </location>
    <ligand>
        <name>dimethylallyl diphosphate</name>
        <dbReference type="ChEBI" id="CHEBI:57623"/>
    </ligand>
</feature>
<feature type="binding site" evidence="1">
    <location>
        <position position="225"/>
    </location>
    <ligand>
        <name>isopentenyl diphosphate</name>
        <dbReference type="ChEBI" id="CHEBI:128769"/>
    </ligand>
</feature>
<feature type="binding site" evidence="1">
    <location>
        <position position="226"/>
    </location>
    <ligand>
        <name>(2E)-4-hydroxy-3-methylbut-2-enyl diphosphate</name>
        <dbReference type="ChEBI" id="CHEBI:128753"/>
    </ligand>
</feature>
<feature type="binding site" evidence="1">
    <location>
        <position position="226"/>
    </location>
    <ligand>
        <name>dimethylallyl diphosphate</name>
        <dbReference type="ChEBI" id="CHEBI:57623"/>
    </ligand>
</feature>
<feature type="binding site" evidence="1">
    <location>
        <position position="226"/>
    </location>
    <ligand>
        <name>isopentenyl diphosphate</name>
        <dbReference type="ChEBI" id="CHEBI:128769"/>
    </ligand>
</feature>
<feature type="binding site" evidence="1">
    <location>
        <position position="227"/>
    </location>
    <ligand>
        <name>(2E)-4-hydroxy-3-methylbut-2-enyl diphosphate</name>
        <dbReference type="ChEBI" id="CHEBI:128753"/>
    </ligand>
</feature>
<feature type="binding site" evidence="1">
    <location>
        <position position="227"/>
    </location>
    <ligand>
        <name>dimethylallyl diphosphate</name>
        <dbReference type="ChEBI" id="CHEBI:57623"/>
    </ligand>
</feature>
<feature type="binding site" evidence="1">
    <location>
        <position position="227"/>
    </location>
    <ligand>
        <name>isopentenyl diphosphate</name>
        <dbReference type="ChEBI" id="CHEBI:128769"/>
    </ligand>
</feature>
<feature type="binding site" evidence="1">
    <location>
        <position position="269"/>
    </location>
    <ligand>
        <name>(2E)-4-hydroxy-3-methylbut-2-enyl diphosphate</name>
        <dbReference type="ChEBI" id="CHEBI:128753"/>
    </ligand>
</feature>
<feature type="binding site" evidence="1">
    <location>
        <position position="269"/>
    </location>
    <ligand>
        <name>dimethylallyl diphosphate</name>
        <dbReference type="ChEBI" id="CHEBI:57623"/>
    </ligand>
</feature>
<feature type="binding site" evidence="1">
    <location>
        <position position="269"/>
    </location>
    <ligand>
        <name>isopentenyl diphosphate</name>
        <dbReference type="ChEBI" id="CHEBI:128769"/>
    </ligand>
</feature>
<gene>
    <name evidence="1" type="primary">ispH</name>
    <name type="ordered locus">SEN0049</name>
</gene>
<evidence type="ECO:0000255" key="1">
    <source>
        <dbReference type="HAMAP-Rule" id="MF_00191"/>
    </source>
</evidence>
<keyword id="KW-0004">4Fe-4S</keyword>
<keyword id="KW-0408">Iron</keyword>
<keyword id="KW-0411">Iron-sulfur</keyword>
<keyword id="KW-0414">Isoprene biosynthesis</keyword>
<keyword id="KW-0479">Metal-binding</keyword>
<keyword id="KW-0560">Oxidoreductase</keyword>